<reference key="1">
    <citation type="journal article" date="2005" name="PLoS Biol.">
        <title>The genome sequence of Rickettsia felis identifies the first putative conjugative plasmid in an obligate intracellular parasite.</title>
        <authorList>
            <person name="Ogata H."/>
            <person name="Renesto P."/>
            <person name="Audic S."/>
            <person name="Robert C."/>
            <person name="Blanc G."/>
            <person name="Fournier P.-E."/>
            <person name="Parinello H."/>
            <person name="Claverie J.-M."/>
            <person name="Raoult D."/>
        </authorList>
    </citation>
    <scope>NUCLEOTIDE SEQUENCE [LARGE SCALE GENOMIC DNA]</scope>
    <source>
        <strain>ATCC VR-1525 / URRWXCal2</strain>
    </source>
</reference>
<name>Y1112_RICFE</name>
<protein>
    <recommendedName>
        <fullName>UPF0369 protein RF_1112</fullName>
    </recommendedName>
</protein>
<evidence type="ECO:0000305" key="1"/>
<dbReference type="EMBL" id="CP000053">
    <property type="protein sequence ID" value="AAY61963.1"/>
    <property type="molecule type" value="Genomic_DNA"/>
</dbReference>
<dbReference type="SMR" id="Q4UKG8"/>
<dbReference type="STRING" id="315456.RF_1112"/>
<dbReference type="KEGG" id="rfe:RF_1112"/>
<dbReference type="eggNOG" id="COG5508">
    <property type="taxonomic scope" value="Bacteria"/>
</dbReference>
<dbReference type="HOGENOM" id="CLU_2619746_0_0_5"/>
<dbReference type="Proteomes" id="UP000008548">
    <property type="component" value="Chromosome"/>
</dbReference>
<dbReference type="InterPro" id="IPR012875">
    <property type="entry name" value="SDHF4"/>
</dbReference>
<dbReference type="PANTHER" id="PTHR28524">
    <property type="entry name" value="SUCCINATE DEHYDROGENASE ASSEMBLY FACTOR 4, MITOCHONDRIAL"/>
    <property type="match status" value="1"/>
</dbReference>
<dbReference type="PANTHER" id="PTHR28524:SF3">
    <property type="entry name" value="SUCCINATE DEHYDROGENASE ASSEMBLY FACTOR 4, MITOCHONDRIAL"/>
    <property type="match status" value="1"/>
</dbReference>
<dbReference type="Pfam" id="PF07896">
    <property type="entry name" value="DUF1674"/>
    <property type="match status" value="1"/>
</dbReference>
<gene>
    <name type="ordered locus">RF_1112</name>
</gene>
<comment type="similarity">
    <text evidence="1">Belongs to the SDHAF4 family.</text>
</comment>
<organism>
    <name type="scientific">Rickettsia felis (strain ATCC VR-1525 / URRWXCal2)</name>
    <name type="common">Rickettsia azadi</name>
    <dbReference type="NCBI Taxonomy" id="315456"/>
    <lineage>
        <taxon>Bacteria</taxon>
        <taxon>Pseudomonadati</taxon>
        <taxon>Pseudomonadota</taxon>
        <taxon>Alphaproteobacteria</taxon>
        <taxon>Rickettsiales</taxon>
        <taxon>Rickettsiaceae</taxon>
        <taxon>Rickettsieae</taxon>
        <taxon>Rickettsia</taxon>
        <taxon>spotted fever group</taxon>
    </lineage>
</organism>
<feature type="chain" id="PRO_0000281040" description="UPF0369 protein RF_1112">
    <location>
        <begin position="1"/>
        <end position="78"/>
    </location>
</feature>
<sequence length="78" mass="9041">MLTYHYTLRSSAYRLLALFQVDLRISTLHFAGVLIMDNKKDNISEEEKLPKEKEIGGVKGLEPTRYGDWQHKGKVTDF</sequence>
<accession>Q4UKG8</accession>
<proteinExistence type="inferred from homology"/>